<name>RS13_DESOH</name>
<dbReference type="EMBL" id="CP000859">
    <property type="protein sequence ID" value="ABW66540.1"/>
    <property type="molecule type" value="Genomic_DNA"/>
</dbReference>
<dbReference type="RefSeq" id="WP_012174158.1">
    <property type="nucleotide sequence ID" value="NC_009943.1"/>
</dbReference>
<dbReference type="SMR" id="A8ZV79"/>
<dbReference type="STRING" id="96561.Dole_0730"/>
<dbReference type="KEGG" id="dol:Dole_0730"/>
<dbReference type="eggNOG" id="COG0099">
    <property type="taxonomic scope" value="Bacteria"/>
</dbReference>
<dbReference type="HOGENOM" id="CLU_103849_1_2_7"/>
<dbReference type="OrthoDB" id="9803610at2"/>
<dbReference type="Proteomes" id="UP000008561">
    <property type="component" value="Chromosome"/>
</dbReference>
<dbReference type="GO" id="GO:0005829">
    <property type="term" value="C:cytosol"/>
    <property type="evidence" value="ECO:0007669"/>
    <property type="project" value="TreeGrafter"/>
</dbReference>
<dbReference type="GO" id="GO:0015935">
    <property type="term" value="C:small ribosomal subunit"/>
    <property type="evidence" value="ECO:0007669"/>
    <property type="project" value="TreeGrafter"/>
</dbReference>
<dbReference type="GO" id="GO:0019843">
    <property type="term" value="F:rRNA binding"/>
    <property type="evidence" value="ECO:0007669"/>
    <property type="project" value="UniProtKB-UniRule"/>
</dbReference>
<dbReference type="GO" id="GO:0003735">
    <property type="term" value="F:structural constituent of ribosome"/>
    <property type="evidence" value="ECO:0007669"/>
    <property type="project" value="InterPro"/>
</dbReference>
<dbReference type="GO" id="GO:0000049">
    <property type="term" value="F:tRNA binding"/>
    <property type="evidence" value="ECO:0007669"/>
    <property type="project" value="UniProtKB-UniRule"/>
</dbReference>
<dbReference type="GO" id="GO:0006412">
    <property type="term" value="P:translation"/>
    <property type="evidence" value="ECO:0007669"/>
    <property type="project" value="UniProtKB-UniRule"/>
</dbReference>
<dbReference type="FunFam" id="1.10.8.50:FF:000001">
    <property type="entry name" value="30S ribosomal protein S13"/>
    <property type="match status" value="1"/>
</dbReference>
<dbReference type="FunFam" id="4.10.910.10:FF:000001">
    <property type="entry name" value="30S ribosomal protein S13"/>
    <property type="match status" value="1"/>
</dbReference>
<dbReference type="Gene3D" id="1.10.8.50">
    <property type="match status" value="1"/>
</dbReference>
<dbReference type="Gene3D" id="4.10.910.10">
    <property type="entry name" value="30s ribosomal protein s13, domain 2"/>
    <property type="match status" value="1"/>
</dbReference>
<dbReference type="HAMAP" id="MF_01315">
    <property type="entry name" value="Ribosomal_uS13"/>
    <property type="match status" value="1"/>
</dbReference>
<dbReference type="InterPro" id="IPR027437">
    <property type="entry name" value="Rbsml_uS13_C"/>
</dbReference>
<dbReference type="InterPro" id="IPR001892">
    <property type="entry name" value="Ribosomal_uS13"/>
</dbReference>
<dbReference type="InterPro" id="IPR010979">
    <property type="entry name" value="Ribosomal_uS13-like_H2TH"/>
</dbReference>
<dbReference type="InterPro" id="IPR019980">
    <property type="entry name" value="Ribosomal_uS13_bac-type"/>
</dbReference>
<dbReference type="InterPro" id="IPR018269">
    <property type="entry name" value="Ribosomal_uS13_CS"/>
</dbReference>
<dbReference type="NCBIfam" id="TIGR03631">
    <property type="entry name" value="uS13_bact"/>
    <property type="match status" value="1"/>
</dbReference>
<dbReference type="PANTHER" id="PTHR10871">
    <property type="entry name" value="30S RIBOSOMAL PROTEIN S13/40S RIBOSOMAL PROTEIN S18"/>
    <property type="match status" value="1"/>
</dbReference>
<dbReference type="PANTHER" id="PTHR10871:SF1">
    <property type="entry name" value="SMALL RIBOSOMAL SUBUNIT PROTEIN US13M"/>
    <property type="match status" value="1"/>
</dbReference>
<dbReference type="Pfam" id="PF00416">
    <property type="entry name" value="Ribosomal_S13"/>
    <property type="match status" value="1"/>
</dbReference>
<dbReference type="PIRSF" id="PIRSF002134">
    <property type="entry name" value="Ribosomal_S13"/>
    <property type="match status" value="1"/>
</dbReference>
<dbReference type="SUPFAM" id="SSF46946">
    <property type="entry name" value="S13-like H2TH domain"/>
    <property type="match status" value="1"/>
</dbReference>
<dbReference type="PROSITE" id="PS00646">
    <property type="entry name" value="RIBOSOMAL_S13_1"/>
    <property type="match status" value="1"/>
</dbReference>
<dbReference type="PROSITE" id="PS50159">
    <property type="entry name" value="RIBOSOMAL_S13_2"/>
    <property type="match status" value="1"/>
</dbReference>
<reference key="1">
    <citation type="submission" date="2007-10" db="EMBL/GenBank/DDBJ databases">
        <title>Complete sequence of Desulfococcus oleovorans Hxd3.</title>
        <authorList>
            <consortium name="US DOE Joint Genome Institute"/>
            <person name="Copeland A."/>
            <person name="Lucas S."/>
            <person name="Lapidus A."/>
            <person name="Barry K."/>
            <person name="Glavina del Rio T."/>
            <person name="Dalin E."/>
            <person name="Tice H."/>
            <person name="Pitluck S."/>
            <person name="Kiss H."/>
            <person name="Brettin T."/>
            <person name="Bruce D."/>
            <person name="Detter J.C."/>
            <person name="Han C."/>
            <person name="Schmutz J."/>
            <person name="Larimer F."/>
            <person name="Land M."/>
            <person name="Hauser L."/>
            <person name="Kyrpides N."/>
            <person name="Kim E."/>
            <person name="Wawrik B."/>
            <person name="Richardson P."/>
        </authorList>
    </citation>
    <scope>NUCLEOTIDE SEQUENCE [LARGE SCALE GENOMIC DNA]</scope>
    <source>
        <strain>DSM 6200 / JCM 39069 / Hxd3</strain>
    </source>
</reference>
<accession>A8ZV79</accession>
<sequence length="127" mass="14405">MARIAGVDLPKRKRVEIGLTYIYGIGRSTSRQILNKLSIDYDTKVDQLTETEINAIRNAVTNEHKVEGELRTEVSMNIKRLMDLGCYRGLRHRKSLPCHGQRTSTNARTRKGPKRTAVKKKGAAKKK</sequence>
<proteinExistence type="inferred from homology"/>
<protein>
    <recommendedName>
        <fullName evidence="1">Small ribosomal subunit protein uS13</fullName>
    </recommendedName>
    <alternativeName>
        <fullName evidence="3">30S ribosomal protein S13</fullName>
    </alternativeName>
</protein>
<gene>
    <name evidence="1" type="primary">rpsM</name>
    <name type="ordered locus">Dole_0730</name>
</gene>
<evidence type="ECO:0000255" key="1">
    <source>
        <dbReference type="HAMAP-Rule" id="MF_01315"/>
    </source>
</evidence>
<evidence type="ECO:0000256" key="2">
    <source>
        <dbReference type="SAM" id="MobiDB-lite"/>
    </source>
</evidence>
<evidence type="ECO:0000305" key="3"/>
<organism>
    <name type="scientific">Desulfosudis oleivorans (strain DSM 6200 / JCM 39069 / Hxd3)</name>
    <name type="common">Desulfococcus oleovorans</name>
    <dbReference type="NCBI Taxonomy" id="96561"/>
    <lineage>
        <taxon>Bacteria</taxon>
        <taxon>Pseudomonadati</taxon>
        <taxon>Thermodesulfobacteriota</taxon>
        <taxon>Desulfobacteria</taxon>
        <taxon>Desulfobacterales</taxon>
        <taxon>Desulfosudaceae</taxon>
        <taxon>Desulfosudis</taxon>
    </lineage>
</organism>
<keyword id="KW-1185">Reference proteome</keyword>
<keyword id="KW-0687">Ribonucleoprotein</keyword>
<keyword id="KW-0689">Ribosomal protein</keyword>
<keyword id="KW-0694">RNA-binding</keyword>
<keyword id="KW-0699">rRNA-binding</keyword>
<keyword id="KW-0820">tRNA-binding</keyword>
<comment type="function">
    <text evidence="1">Located at the top of the head of the 30S subunit, it contacts several helices of the 16S rRNA. In the 70S ribosome it contacts the 23S rRNA (bridge B1a) and protein L5 of the 50S subunit (bridge B1b), connecting the 2 subunits; these bridges are implicated in subunit movement. Contacts the tRNAs in the A and P-sites.</text>
</comment>
<comment type="subunit">
    <text evidence="1">Part of the 30S ribosomal subunit. Forms a loose heterodimer with protein S19. Forms two bridges to the 50S subunit in the 70S ribosome.</text>
</comment>
<comment type="similarity">
    <text evidence="1">Belongs to the universal ribosomal protein uS13 family.</text>
</comment>
<feature type="chain" id="PRO_1000141256" description="Small ribosomal subunit protein uS13">
    <location>
        <begin position="1"/>
        <end position="127"/>
    </location>
</feature>
<feature type="region of interest" description="Disordered" evidence="2">
    <location>
        <begin position="96"/>
        <end position="127"/>
    </location>
</feature>
<feature type="compositionally biased region" description="Basic residues" evidence="2">
    <location>
        <begin position="108"/>
        <end position="127"/>
    </location>
</feature>